<organism>
    <name type="scientific">Candida glabrata (strain ATCC 2001 / BCRC 20586 / JCM 3761 / NBRC 0622 / NRRL Y-65 / CBS 138)</name>
    <name type="common">Yeast</name>
    <name type="synonym">Nakaseomyces glabratus</name>
    <dbReference type="NCBI Taxonomy" id="284593"/>
    <lineage>
        <taxon>Eukaryota</taxon>
        <taxon>Fungi</taxon>
        <taxon>Dikarya</taxon>
        <taxon>Ascomycota</taxon>
        <taxon>Saccharomycotina</taxon>
        <taxon>Saccharomycetes</taxon>
        <taxon>Saccharomycetales</taxon>
        <taxon>Saccharomycetaceae</taxon>
        <taxon>Nakaseomyces</taxon>
    </lineage>
</organism>
<keyword id="KW-0963">Cytoplasm</keyword>
<keyword id="KW-0539">Nucleus</keyword>
<keyword id="KW-1185">Reference proteome</keyword>
<gene>
    <name type="primary">DIF1</name>
    <name type="ordered locus">CAGL0M00902g</name>
</gene>
<name>DIF1_CANGA</name>
<proteinExistence type="inferred from homology"/>
<accession>Q6FK59</accession>
<evidence type="ECO:0000250" key="1"/>
<evidence type="ECO:0000256" key="2">
    <source>
        <dbReference type="SAM" id="MobiDB-lite"/>
    </source>
</evidence>
<evidence type="ECO:0000305" key="3"/>
<sequence>MDNKRHQTSIGSELSEAQNRLSTVGMRIRQRIDRGYAYSGKNVSGMDDQVPIRDVASTIVPQFRTQVLYEQQQQPQQMHRPAMNGPAPMLVNQRTESSNLDCMQEEMLSNGKRRVF</sequence>
<reference key="1">
    <citation type="journal article" date="2004" name="Nature">
        <title>Genome evolution in yeasts.</title>
        <authorList>
            <person name="Dujon B."/>
            <person name="Sherman D."/>
            <person name="Fischer G."/>
            <person name="Durrens P."/>
            <person name="Casaregola S."/>
            <person name="Lafontaine I."/>
            <person name="de Montigny J."/>
            <person name="Marck C."/>
            <person name="Neuveglise C."/>
            <person name="Talla E."/>
            <person name="Goffard N."/>
            <person name="Frangeul L."/>
            <person name="Aigle M."/>
            <person name="Anthouard V."/>
            <person name="Babour A."/>
            <person name="Barbe V."/>
            <person name="Barnay S."/>
            <person name="Blanchin S."/>
            <person name="Beckerich J.-M."/>
            <person name="Beyne E."/>
            <person name="Bleykasten C."/>
            <person name="Boisrame A."/>
            <person name="Boyer J."/>
            <person name="Cattolico L."/>
            <person name="Confanioleri F."/>
            <person name="de Daruvar A."/>
            <person name="Despons L."/>
            <person name="Fabre E."/>
            <person name="Fairhead C."/>
            <person name="Ferry-Dumazet H."/>
            <person name="Groppi A."/>
            <person name="Hantraye F."/>
            <person name="Hennequin C."/>
            <person name="Jauniaux N."/>
            <person name="Joyet P."/>
            <person name="Kachouri R."/>
            <person name="Kerrest A."/>
            <person name="Koszul R."/>
            <person name="Lemaire M."/>
            <person name="Lesur I."/>
            <person name="Ma L."/>
            <person name="Muller H."/>
            <person name="Nicaud J.-M."/>
            <person name="Nikolski M."/>
            <person name="Oztas S."/>
            <person name="Ozier-Kalogeropoulos O."/>
            <person name="Pellenz S."/>
            <person name="Potier S."/>
            <person name="Richard G.-F."/>
            <person name="Straub M.-L."/>
            <person name="Suleau A."/>
            <person name="Swennen D."/>
            <person name="Tekaia F."/>
            <person name="Wesolowski-Louvel M."/>
            <person name="Westhof E."/>
            <person name="Wirth B."/>
            <person name="Zeniou-Meyer M."/>
            <person name="Zivanovic Y."/>
            <person name="Bolotin-Fukuhara M."/>
            <person name="Thierry A."/>
            <person name="Bouchier C."/>
            <person name="Caudron B."/>
            <person name="Scarpelli C."/>
            <person name="Gaillardin C."/>
            <person name="Weissenbach J."/>
            <person name="Wincker P."/>
            <person name="Souciet J.-L."/>
        </authorList>
    </citation>
    <scope>NUCLEOTIDE SEQUENCE [LARGE SCALE GENOMIC DNA]</scope>
    <source>
        <strain>ATCC 2001 / BCRC 20586 / JCM 3761 / NBRC 0622 / NRRL Y-65 / CBS 138</strain>
    </source>
</reference>
<feature type="chain" id="PRO_0000399011" description="Damage-regulated import facilitator 1">
    <location>
        <begin position="1"/>
        <end position="116"/>
    </location>
</feature>
<feature type="region of interest" description="Disordered" evidence="2">
    <location>
        <begin position="1"/>
        <end position="22"/>
    </location>
</feature>
<feature type="compositionally biased region" description="Polar residues" evidence="2">
    <location>
        <begin position="8"/>
        <end position="22"/>
    </location>
</feature>
<dbReference type="EMBL" id="CR380959">
    <property type="protein sequence ID" value="CAG62361.1"/>
    <property type="molecule type" value="Genomic_DNA"/>
</dbReference>
<dbReference type="RefSeq" id="XP_449385.1">
    <property type="nucleotide sequence ID" value="XM_449385.1"/>
</dbReference>
<dbReference type="FunCoup" id="Q6FK59">
    <property type="interactions" value="62"/>
</dbReference>
<dbReference type="EnsemblFungi" id="CAGL0M00902g-T">
    <property type="protein sequence ID" value="CAGL0M00902g-T-p1"/>
    <property type="gene ID" value="CAGL0M00902g"/>
</dbReference>
<dbReference type="KEGG" id="cgr:2891608"/>
<dbReference type="CGD" id="CAL0137429">
    <property type="gene designation" value="CAGL0M00902g"/>
</dbReference>
<dbReference type="VEuPathDB" id="FungiDB:B1J91_M00902g"/>
<dbReference type="VEuPathDB" id="FungiDB:CAGL0M00902g"/>
<dbReference type="eggNOG" id="ENOG502SGAU">
    <property type="taxonomic scope" value="Eukaryota"/>
</dbReference>
<dbReference type="HOGENOM" id="CLU_2096571_0_0_1"/>
<dbReference type="InParanoid" id="Q6FK59"/>
<dbReference type="OMA" id="TIVPQFR"/>
<dbReference type="Proteomes" id="UP000002428">
    <property type="component" value="Chromosome M"/>
</dbReference>
<dbReference type="GO" id="GO:0005737">
    <property type="term" value="C:cytoplasm"/>
    <property type="evidence" value="ECO:0007669"/>
    <property type="project" value="UniProtKB-SubCell"/>
</dbReference>
<dbReference type="GO" id="GO:0005634">
    <property type="term" value="C:nucleus"/>
    <property type="evidence" value="ECO:0007669"/>
    <property type="project" value="UniProtKB-SubCell"/>
</dbReference>
<comment type="function">
    <text evidence="1">Mediates the nuclear localization of the ribonucleotide reductase.</text>
</comment>
<comment type="subcellular location">
    <subcellularLocation>
        <location evidence="1">Cytoplasm</location>
    </subcellularLocation>
    <subcellularLocation>
        <location evidence="1">Nucleus</location>
    </subcellularLocation>
</comment>
<comment type="similarity">
    <text evidence="3">Belongs to the DIF1/spd1 family.</text>
</comment>
<protein>
    <recommendedName>
        <fullName>Damage-regulated import facilitator 1</fullName>
    </recommendedName>
</protein>